<proteinExistence type="inferred from homology"/>
<gene>
    <name evidence="1" type="primary">rplT</name>
    <name type="ordered locus">Strop_1884</name>
</gene>
<keyword id="KW-1185">Reference proteome</keyword>
<keyword id="KW-0687">Ribonucleoprotein</keyword>
<keyword id="KW-0689">Ribosomal protein</keyword>
<keyword id="KW-0694">RNA-binding</keyword>
<keyword id="KW-0699">rRNA-binding</keyword>
<comment type="function">
    <text evidence="1">Binds directly to 23S ribosomal RNA and is necessary for the in vitro assembly process of the 50S ribosomal subunit. It is not involved in the protein synthesizing functions of that subunit.</text>
</comment>
<comment type="similarity">
    <text evidence="1">Belongs to the bacterial ribosomal protein bL20 family.</text>
</comment>
<feature type="chain" id="PRO_1000080093" description="Large ribosomal subunit protein bL20">
    <location>
        <begin position="1"/>
        <end position="130"/>
    </location>
</feature>
<dbReference type="EMBL" id="CP000667">
    <property type="protein sequence ID" value="ABP54346.1"/>
    <property type="molecule type" value="Genomic_DNA"/>
</dbReference>
<dbReference type="RefSeq" id="WP_011905776.1">
    <property type="nucleotide sequence ID" value="NC_009380.1"/>
</dbReference>
<dbReference type="SMR" id="A4X646"/>
<dbReference type="STRING" id="369723.Strop_1884"/>
<dbReference type="KEGG" id="stp:Strop_1884"/>
<dbReference type="PATRIC" id="fig|369723.5.peg.1932"/>
<dbReference type="eggNOG" id="COG0292">
    <property type="taxonomic scope" value="Bacteria"/>
</dbReference>
<dbReference type="HOGENOM" id="CLU_123265_0_0_11"/>
<dbReference type="Proteomes" id="UP000000235">
    <property type="component" value="Chromosome"/>
</dbReference>
<dbReference type="GO" id="GO:1990904">
    <property type="term" value="C:ribonucleoprotein complex"/>
    <property type="evidence" value="ECO:0007669"/>
    <property type="project" value="UniProtKB-KW"/>
</dbReference>
<dbReference type="GO" id="GO:0005840">
    <property type="term" value="C:ribosome"/>
    <property type="evidence" value="ECO:0007669"/>
    <property type="project" value="UniProtKB-KW"/>
</dbReference>
<dbReference type="GO" id="GO:0019843">
    <property type="term" value="F:rRNA binding"/>
    <property type="evidence" value="ECO:0007669"/>
    <property type="project" value="UniProtKB-UniRule"/>
</dbReference>
<dbReference type="GO" id="GO:0003735">
    <property type="term" value="F:structural constituent of ribosome"/>
    <property type="evidence" value="ECO:0007669"/>
    <property type="project" value="InterPro"/>
</dbReference>
<dbReference type="GO" id="GO:0000027">
    <property type="term" value="P:ribosomal large subunit assembly"/>
    <property type="evidence" value="ECO:0007669"/>
    <property type="project" value="UniProtKB-UniRule"/>
</dbReference>
<dbReference type="GO" id="GO:0006412">
    <property type="term" value="P:translation"/>
    <property type="evidence" value="ECO:0007669"/>
    <property type="project" value="InterPro"/>
</dbReference>
<dbReference type="CDD" id="cd07026">
    <property type="entry name" value="Ribosomal_L20"/>
    <property type="match status" value="1"/>
</dbReference>
<dbReference type="FunFam" id="1.10.1900.20:FF:000001">
    <property type="entry name" value="50S ribosomal protein L20"/>
    <property type="match status" value="1"/>
</dbReference>
<dbReference type="Gene3D" id="6.10.160.10">
    <property type="match status" value="1"/>
</dbReference>
<dbReference type="Gene3D" id="1.10.1900.20">
    <property type="entry name" value="Ribosomal protein L20"/>
    <property type="match status" value="1"/>
</dbReference>
<dbReference type="HAMAP" id="MF_00382">
    <property type="entry name" value="Ribosomal_bL20"/>
    <property type="match status" value="1"/>
</dbReference>
<dbReference type="InterPro" id="IPR005813">
    <property type="entry name" value="Ribosomal_bL20"/>
</dbReference>
<dbReference type="InterPro" id="IPR049946">
    <property type="entry name" value="RIBOSOMAL_L20_CS"/>
</dbReference>
<dbReference type="InterPro" id="IPR035566">
    <property type="entry name" value="Ribosomal_protein_bL20_C"/>
</dbReference>
<dbReference type="NCBIfam" id="TIGR01032">
    <property type="entry name" value="rplT_bact"/>
    <property type="match status" value="1"/>
</dbReference>
<dbReference type="PANTHER" id="PTHR10986">
    <property type="entry name" value="39S RIBOSOMAL PROTEIN L20"/>
    <property type="match status" value="1"/>
</dbReference>
<dbReference type="Pfam" id="PF00453">
    <property type="entry name" value="Ribosomal_L20"/>
    <property type="match status" value="1"/>
</dbReference>
<dbReference type="PRINTS" id="PR00062">
    <property type="entry name" value="RIBOSOMALL20"/>
</dbReference>
<dbReference type="SUPFAM" id="SSF74731">
    <property type="entry name" value="Ribosomal protein L20"/>
    <property type="match status" value="1"/>
</dbReference>
<dbReference type="PROSITE" id="PS00937">
    <property type="entry name" value="RIBOSOMAL_L20"/>
    <property type="match status" value="1"/>
</dbReference>
<reference key="1">
    <citation type="journal article" date="2007" name="Proc. Natl. Acad. Sci. U.S.A.">
        <title>Genome sequencing reveals complex secondary metabolome in the marine actinomycete Salinispora tropica.</title>
        <authorList>
            <person name="Udwary D.W."/>
            <person name="Zeigler L."/>
            <person name="Asolkar R.N."/>
            <person name="Singan V."/>
            <person name="Lapidus A."/>
            <person name="Fenical W."/>
            <person name="Jensen P.R."/>
            <person name="Moore B.S."/>
        </authorList>
    </citation>
    <scope>NUCLEOTIDE SEQUENCE [LARGE SCALE GENOMIC DNA]</scope>
    <source>
        <strain>ATCC BAA-916 / DSM 44818 / JCM 13857 / NBRC 105044 / CNB-440</strain>
    </source>
</reference>
<accession>A4X646</accession>
<sequence>MARVKRAVNAQKKRRTLLATASGYRGQRSRLYRKAKEQVLHSMQYSYRDRRDRKGDFRQLWIQRINAGARANGLTYNRLIQGLKLAGIEVDRKILADLAVNDAAAFAAIVEKARAAVAEEGTGGAAAQAA</sequence>
<protein>
    <recommendedName>
        <fullName evidence="1">Large ribosomal subunit protein bL20</fullName>
    </recommendedName>
    <alternativeName>
        <fullName evidence="2">50S ribosomal protein L20</fullName>
    </alternativeName>
</protein>
<organism>
    <name type="scientific">Salinispora tropica (strain ATCC BAA-916 / DSM 44818 / JCM 13857 / NBRC 105044 / CNB-440)</name>
    <dbReference type="NCBI Taxonomy" id="369723"/>
    <lineage>
        <taxon>Bacteria</taxon>
        <taxon>Bacillati</taxon>
        <taxon>Actinomycetota</taxon>
        <taxon>Actinomycetes</taxon>
        <taxon>Micromonosporales</taxon>
        <taxon>Micromonosporaceae</taxon>
        <taxon>Salinispora</taxon>
    </lineage>
</organism>
<name>RL20_SALTO</name>
<evidence type="ECO:0000255" key="1">
    <source>
        <dbReference type="HAMAP-Rule" id="MF_00382"/>
    </source>
</evidence>
<evidence type="ECO:0000305" key="2"/>